<reference key="1">
    <citation type="journal article" date="1992" name="Nucleic Acids Res.">
        <title>Differential expression of genes encoding the hypusine-containing translation initiation factor, eIF-5A, in tobacco.</title>
        <authorList>
            <person name="Chamot D."/>
            <person name="Kuhlemeter C."/>
        </authorList>
    </citation>
    <scope>NUCLEOTIDE SEQUENCE [MRNA]</scope>
    <source>
        <tissue>Leaf</tissue>
    </source>
</reference>
<keyword id="KW-0385">Hypusine</keyword>
<keyword id="KW-0396">Initiation factor</keyword>
<keyword id="KW-0648">Protein biosynthesis</keyword>
<protein>
    <recommendedName>
        <fullName>Eukaryotic translation initiation factor 5A-1</fullName>
        <shortName>eIF-5A-1</shortName>
    </recommendedName>
    <alternativeName>
        <fullName>eIF-4D</fullName>
    </alternativeName>
</protein>
<proteinExistence type="evidence at transcript level"/>
<comment type="function">
    <text evidence="1">Translation factor that promotes translation elongation and termination, particularly upon ribosome stalling at specific amino acid sequence contexts (By similarity). Binds between the exit (E) and peptidyl (P) site of the ribosome and promotes rescue of stalled ribosome: specifically required for efficient translation of polyproline-containing peptides as well as other motifs that stall the ribosome (By similarity). Acts as a ribosome quality control (RQC) cofactor by joining the RQC complex to facilitate peptidyl transfer during CAT tailing step (By similarity).</text>
</comment>
<comment type="PTM">
    <text evidence="2">Lys-52 undergoes hypusination, a unique post-translational modification that consists in the addition of a butylamino group from spermidine to lysine side chain, leading to the formation of the unusual amino acid hypusine. eIF-5As are the only known proteins to undergo this modification, which is essential for their function.</text>
</comment>
<comment type="miscellaneous">
    <text>There are at least two genes for eIF-5A in tobacco: 5A1 may regulate the light-dependent translation of specific transcripts while 5A2 may be a housekeeping protein.</text>
</comment>
<comment type="similarity">
    <text evidence="4">Belongs to the eIF-5A family.</text>
</comment>
<organism>
    <name type="scientific">Nicotiana plumbaginifolia</name>
    <name type="common">Leadwort-leaved tobacco</name>
    <name type="synonym">Tex-Mex tobacco</name>
    <dbReference type="NCBI Taxonomy" id="4092"/>
    <lineage>
        <taxon>Eukaryota</taxon>
        <taxon>Viridiplantae</taxon>
        <taxon>Streptophyta</taxon>
        <taxon>Embryophyta</taxon>
        <taxon>Tracheophyta</taxon>
        <taxon>Spermatophyta</taxon>
        <taxon>Magnoliopsida</taxon>
        <taxon>eudicotyledons</taxon>
        <taxon>Gunneridae</taxon>
        <taxon>Pentapetalae</taxon>
        <taxon>asterids</taxon>
        <taxon>lamiids</taxon>
        <taxon>Solanales</taxon>
        <taxon>Solanaceae</taxon>
        <taxon>Nicotianoideae</taxon>
        <taxon>Nicotianeae</taxon>
        <taxon>Nicotiana</taxon>
    </lineage>
</organism>
<name>IF5A1_NICPL</name>
<accession>P69039</accession>
<accession>P24921</accession>
<gene>
    <name type="primary">EIF-5A1</name>
</gene>
<dbReference type="EMBL" id="X63541">
    <property type="protein sequence ID" value="CAA45103.1"/>
    <property type="molecule type" value="mRNA"/>
</dbReference>
<dbReference type="PIR" id="S21058">
    <property type="entry name" value="S21058"/>
</dbReference>
<dbReference type="SMR" id="P69039"/>
<dbReference type="GO" id="GO:0043022">
    <property type="term" value="F:ribosome binding"/>
    <property type="evidence" value="ECO:0007669"/>
    <property type="project" value="InterPro"/>
</dbReference>
<dbReference type="GO" id="GO:0003723">
    <property type="term" value="F:RNA binding"/>
    <property type="evidence" value="ECO:0007669"/>
    <property type="project" value="InterPro"/>
</dbReference>
<dbReference type="GO" id="GO:0003746">
    <property type="term" value="F:translation elongation factor activity"/>
    <property type="evidence" value="ECO:0007669"/>
    <property type="project" value="InterPro"/>
</dbReference>
<dbReference type="GO" id="GO:0003743">
    <property type="term" value="F:translation initiation factor activity"/>
    <property type="evidence" value="ECO:0007669"/>
    <property type="project" value="UniProtKB-KW"/>
</dbReference>
<dbReference type="GO" id="GO:0045901">
    <property type="term" value="P:positive regulation of translational elongation"/>
    <property type="evidence" value="ECO:0007669"/>
    <property type="project" value="InterPro"/>
</dbReference>
<dbReference type="GO" id="GO:0045905">
    <property type="term" value="P:positive regulation of translational termination"/>
    <property type="evidence" value="ECO:0007669"/>
    <property type="project" value="InterPro"/>
</dbReference>
<dbReference type="CDD" id="cd04468">
    <property type="entry name" value="S1_eIF5A"/>
    <property type="match status" value="1"/>
</dbReference>
<dbReference type="FunFam" id="2.30.30.30:FF:000012">
    <property type="entry name" value="Eukaryotic translation initiation factor 5A"/>
    <property type="match status" value="1"/>
</dbReference>
<dbReference type="FunFam" id="2.40.50.140:FF:000034">
    <property type="entry name" value="Eukaryotic translation initiation factor 5A"/>
    <property type="match status" value="1"/>
</dbReference>
<dbReference type="Gene3D" id="2.30.30.30">
    <property type="match status" value="1"/>
</dbReference>
<dbReference type="Gene3D" id="2.40.50.140">
    <property type="entry name" value="Nucleic acid-binding proteins"/>
    <property type="match status" value="1"/>
</dbReference>
<dbReference type="InterPro" id="IPR001884">
    <property type="entry name" value="IF5A-like"/>
</dbReference>
<dbReference type="InterPro" id="IPR048670">
    <property type="entry name" value="IF5A-like_N"/>
</dbReference>
<dbReference type="InterPro" id="IPR012340">
    <property type="entry name" value="NA-bd_OB-fold"/>
</dbReference>
<dbReference type="InterPro" id="IPR014722">
    <property type="entry name" value="Rib_uL2_dom2"/>
</dbReference>
<dbReference type="InterPro" id="IPR019769">
    <property type="entry name" value="Trans_elong_IF5A_hypusine_site"/>
</dbReference>
<dbReference type="InterPro" id="IPR020189">
    <property type="entry name" value="Transl_elong_IF5A_C"/>
</dbReference>
<dbReference type="InterPro" id="IPR008991">
    <property type="entry name" value="Translation_prot_SH3-like_sf"/>
</dbReference>
<dbReference type="NCBIfam" id="TIGR00037">
    <property type="entry name" value="eIF_5A"/>
    <property type="match status" value="1"/>
</dbReference>
<dbReference type="PANTHER" id="PTHR11673">
    <property type="entry name" value="TRANSLATION INITIATION FACTOR 5A FAMILY MEMBER"/>
    <property type="match status" value="1"/>
</dbReference>
<dbReference type="Pfam" id="PF01287">
    <property type="entry name" value="eIF-5a"/>
    <property type="match status" value="1"/>
</dbReference>
<dbReference type="Pfam" id="PF21485">
    <property type="entry name" value="IF5A-like_N"/>
    <property type="match status" value="1"/>
</dbReference>
<dbReference type="PIRSF" id="PIRSF003025">
    <property type="entry name" value="eIF5A"/>
    <property type="match status" value="1"/>
</dbReference>
<dbReference type="SMART" id="SM01376">
    <property type="entry name" value="eIF-5a"/>
    <property type="match status" value="1"/>
</dbReference>
<dbReference type="SUPFAM" id="SSF50249">
    <property type="entry name" value="Nucleic acid-binding proteins"/>
    <property type="match status" value="1"/>
</dbReference>
<dbReference type="SUPFAM" id="SSF50104">
    <property type="entry name" value="Translation proteins SH3-like domain"/>
    <property type="match status" value="1"/>
</dbReference>
<dbReference type="PROSITE" id="PS00302">
    <property type="entry name" value="IF5A_HYPUSINE"/>
    <property type="match status" value="1"/>
</dbReference>
<evidence type="ECO:0000250" key="1">
    <source>
        <dbReference type="UniProtKB" id="P23301"/>
    </source>
</evidence>
<evidence type="ECO:0000250" key="2">
    <source>
        <dbReference type="UniProtKB" id="Q9XI91"/>
    </source>
</evidence>
<evidence type="ECO:0000256" key="3">
    <source>
        <dbReference type="SAM" id="MobiDB-lite"/>
    </source>
</evidence>
<evidence type="ECO:0000305" key="4"/>
<sequence length="159" mass="17371">MSDEEHHFESKADAGASKTYPQQAGTIRKNGHIVIKNRPCKVVEVSTSKTGKHGHAKCHFVAIDIFTGKKLEDIVPSSHNCDVPHVNRTDYQLIDISEDGFVSLLTENGNTKDDLRLPTDDNLLALIKDGFAEGKDLVLSVMSAMGEEQICGIKDVGPK</sequence>
<feature type="chain" id="PRO_0000142475" description="Eukaryotic translation initiation factor 5A-1">
    <location>
        <begin position="1"/>
        <end position="159"/>
    </location>
</feature>
<feature type="region of interest" description="Disordered" evidence="3">
    <location>
        <begin position="1"/>
        <end position="23"/>
    </location>
</feature>
<feature type="compositionally biased region" description="Basic and acidic residues" evidence="3">
    <location>
        <begin position="1"/>
        <end position="12"/>
    </location>
</feature>
<feature type="modified residue" description="Hypusine" evidence="2">
    <location>
        <position position="52"/>
    </location>
</feature>